<organism>
    <name type="scientific">Dictyostelium discoideum</name>
    <name type="common">Social amoeba</name>
    <dbReference type="NCBI Taxonomy" id="44689"/>
    <lineage>
        <taxon>Eukaryota</taxon>
        <taxon>Amoebozoa</taxon>
        <taxon>Evosea</taxon>
        <taxon>Eumycetozoa</taxon>
        <taxon>Dictyostelia</taxon>
        <taxon>Dictyosteliales</taxon>
        <taxon>Dictyosteliaceae</taxon>
        <taxon>Dictyostelium</taxon>
    </lineage>
</organism>
<reference key="1">
    <citation type="journal article" date="2002" name="Nature">
        <title>Sequence and analysis of chromosome 2 of Dictyostelium discoideum.</title>
        <authorList>
            <person name="Gloeckner G."/>
            <person name="Eichinger L."/>
            <person name="Szafranski K."/>
            <person name="Pachebat J.A."/>
            <person name="Bankier A.T."/>
            <person name="Dear P.H."/>
            <person name="Lehmann R."/>
            <person name="Baumgart C."/>
            <person name="Parra G."/>
            <person name="Abril J.F."/>
            <person name="Guigo R."/>
            <person name="Kumpf K."/>
            <person name="Tunggal B."/>
            <person name="Cox E.C."/>
            <person name="Quail M.A."/>
            <person name="Platzer M."/>
            <person name="Rosenthal A."/>
            <person name="Noegel A.A."/>
        </authorList>
    </citation>
    <scope>NUCLEOTIDE SEQUENCE [LARGE SCALE GENOMIC DNA]</scope>
    <source>
        <strain>AX4</strain>
    </source>
</reference>
<reference key="2">
    <citation type="journal article" date="2005" name="Nature">
        <title>The genome of the social amoeba Dictyostelium discoideum.</title>
        <authorList>
            <person name="Eichinger L."/>
            <person name="Pachebat J.A."/>
            <person name="Gloeckner G."/>
            <person name="Rajandream M.A."/>
            <person name="Sucgang R."/>
            <person name="Berriman M."/>
            <person name="Song J."/>
            <person name="Olsen R."/>
            <person name="Szafranski K."/>
            <person name="Xu Q."/>
            <person name="Tunggal B."/>
            <person name="Kummerfeld S."/>
            <person name="Madera M."/>
            <person name="Konfortov B.A."/>
            <person name="Rivero F."/>
            <person name="Bankier A.T."/>
            <person name="Lehmann R."/>
            <person name="Hamlin N."/>
            <person name="Davies R."/>
            <person name="Gaudet P."/>
            <person name="Fey P."/>
            <person name="Pilcher K."/>
            <person name="Chen G."/>
            <person name="Saunders D."/>
            <person name="Sodergren E.J."/>
            <person name="Davis P."/>
            <person name="Kerhornou A."/>
            <person name="Nie X."/>
            <person name="Hall N."/>
            <person name="Anjard C."/>
            <person name="Hemphill L."/>
            <person name="Bason N."/>
            <person name="Farbrother P."/>
            <person name="Desany B."/>
            <person name="Just E."/>
            <person name="Morio T."/>
            <person name="Rost R."/>
            <person name="Churcher C.M."/>
            <person name="Cooper J."/>
            <person name="Haydock S."/>
            <person name="van Driessche N."/>
            <person name="Cronin A."/>
            <person name="Goodhead I."/>
            <person name="Muzny D.M."/>
            <person name="Mourier T."/>
            <person name="Pain A."/>
            <person name="Lu M."/>
            <person name="Harper D."/>
            <person name="Lindsay R."/>
            <person name="Hauser H."/>
            <person name="James K.D."/>
            <person name="Quiles M."/>
            <person name="Madan Babu M."/>
            <person name="Saito T."/>
            <person name="Buchrieser C."/>
            <person name="Wardroper A."/>
            <person name="Felder M."/>
            <person name="Thangavelu M."/>
            <person name="Johnson D."/>
            <person name="Knights A."/>
            <person name="Loulseged H."/>
            <person name="Mungall K.L."/>
            <person name="Oliver K."/>
            <person name="Price C."/>
            <person name="Quail M.A."/>
            <person name="Urushihara H."/>
            <person name="Hernandez J."/>
            <person name="Rabbinowitsch E."/>
            <person name="Steffen D."/>
            <person name="Sanders M."/>
            <person name="Ma J."/>
            <person name="Kohara Y."/>
            <person name="Sharp S."/>
            <person name="Simmonds M.N."/>
            <person name="Spiegler S."/>
            <person name="Tivey A."/>
            <person name="Sugano S."/>
            <person name="White B."/>
            <person name="Walker D."/>
            <person name="Woodward J.R."/>
            <person name="Winckler T."/>
            <person name="Tanaka Y."/>
            <person name="Shaulsky G."/>
            <person name="Schleicher M."/>
            <person name="Weinstock G.M."/>
            <person name="Rosenthal A."/>
            <person name="Cox E.C."/>
            <person name="Chisholm R.L."/>
            <person name="Gibbs R.A."/>
            <person name="Loomis W.F."/>
            <person name="Platzer M."/>
            <person name="Kay R.R."/>
            <person name="Williams J.G."/>
            <person name="Dear P.H."/>
            <person name="Noegel A.A."/>
            <person name="Barrell B.G."/>
            <person name="Kuspa A."/>
        </authorList>
    </citation>
    <scope>NUCLEOTIDE SEQUENCE [LARGE SCALE GENOMIC DNA]</scope>
    <source>
        <strain>AX4</strain>
    </source>
</reference>
<gene>
    <name type="ORF">DDB_G0271400</name>
</gene>
<sequence length="376" mass="42914">MTPNDDDDTKVITFSSDYPDTDYRFLEANQEILDQIKNNKKLVIKGSLTDEAVLCTDDKTFTIRAGHTSNSMLLVSKDTNKIKVALQYHLELTEIQPKLNVLKDLLYSKAIDNSLDFEDDENLLGFSFDEIIDRIQSSEKEIQQYLLKLNTLIYKNRYIVLSENYEFKILELILSEATIGAWKLDNIPIDKCIENIRAPEFIIKHCLQLYSKQKSPTNSGGGGEEIKGGGGDDNNDENICSLDFNKVCIFRAKQLLTLSNKSNMKFEDFMDNWKDTLPIEIQPNFSMLKGIAILIPSSSTNPKEKSVKFINESILPTIPKARFKELFQISTRWSIDDIEPFIKSTIPPGNSLEQFILTYSRPITTSTGEKMIVTRF</sequence>
<dbReference type="EMBL" id="AAFI02000006">
    <property type="protein sequence ID" value="EAL71830.1"/>
    <property type="molecule type" value="Genomic_DNA"/>
</dbReference>
<dbReference type="RefSeq" id="XP_645707.1">
    <property type="nucleotide sequence ID" value="XM_640615.1"/>
</dbReference>
<dbReference type="SMR" id="Q55BA5"/>
<dbReference type="FunCoup" id="Q55BA5">
    <property type="interactions" value="353"/>
</dbReference>
<dbReference type="STRING" id="44689.Q55BA5"/>
<dbReference type="PaxDb" id="44689-DDB0216809"/>
<dbReference type="EnsemblProtists" id="EAL71830">
    <property type="protein sequence ID" value="EAL71830"/>
    <property type="gene ID" value="DDB_G0271400"/>
</dbReference>
<dbReference type="GeneID" id="8617900"/>
<dbReference type="KEGG" id="ddi:DDB_G0271400"/>
<dbReference type="dictyBase" id="DDB_G0271400">
    <property type="gene designation" value="dcc1"/>
</dbReference>
<dbReference type="VEuPathDB" id="AmoebaDB:DDB_G0271400"/>
<dbReference type="eggNOG" id="KOG0798">
    <property type="taxonomic scope" value="Eukaryota"/>
</dbReference>
<dbReference type="HOGENOM" id="CLU_034504_1_1_1"/>
<dbReference type="InParanoid" id="Q55BA5"/>
<dbReference type="OMA" id="DSESWPF"/>
<dbReference type="PhylomeDB" id="Q55BA5"/>
<dbReference type="PRO" id="PR:Q55BA5"/>
<dbReference type="Proteomes" id="UP000002195">
    <property type="component" value="Chromosome 2"/>
</dbReference>
<dbReference type="GO" id="GO:0000785">
    <property type="term" value="C:chromatin"/>
    <property type="evidence" value="ECO:0000250"/>
    <property type="project" value="UniProtKB"/>
</dbReference>
<dbReference type="GO" id="GO:0000775">
    <property type="term" value="C:chromosome, centromeric region"/>
    <property type="evidence" value="ECO:0000318"/>
    <property type="project" value="GO_Central"/>
</dbReference>
<dbReference type="GO" id="GO:0031390">
    <property type="term" value="C:Ctf18 RFC-like complex"/>
    <property type="evidence" value="ECO:0000318"/>
    <property type="project" value="GO_Central"/>
</dbReference>
<dbReference type="GO" id="GO:0003677">
    <property type="term" value="F:DNA binding"/>
    <property type="evidence" value="ECO:0007669"/>
    <property type="project" value="UniProtKB-KW"/>
</dbReference>
<dbReference type="GO" id="GO:0006260">
    <property type="term" value="P:DNA replication"/>
    <property type="evidence" value="ECO:0007669"/>
    <property type="project" value="UniProtKB-KW"/>
</dbReference>
<dbReference type="GO" id="GO:0034088">
    <property type="term" value="P:maintenance of mitotic sister chromatid cohesion"/>
    <property type="evidence" value="ECO:0000250"/>
    <property type="project" value="UniProtKB"/>
</dbReference>
<dbReference type="GO" id="GO:0006275">
    <property type="term" value="P:regulation of DNA replication"/>
    <property type="evidence" value="ECO:0000250"/>
    <property type="project" value="UniProtKB"/>
</dbReference>
<dbReference type="InterPro" id="IPR019128">
    <property type="entry name" value="Dcc1"/>
</dbReference>
<dbReference type="PANTHER" id="PTHR13395:SF6">
    <property type="entry name" value="SISTER CHROMATID COHESION PROTEIN DCC1"/>
    <property type="match status" value="1"/>
</dbReference>
<dbReference type="PANTHER" id="PTHR13395">
    <property type="entry name" value="SISTER CHROMATID COHESION PROTEIN DCC1-RELATED"/>
    <property type="match status" value="1"/>
</dbReference>
<dbReference type="Pfam" id="PF09724">
    <property type="entry name" value="Dcc1"/>
    <property type="match status" value="1"/>
</dbReference>
<accession>Q55BA5</accession>
<name>DCC1_DICDI</name>
<evidence type="ECO:0000250" key="1"/>
<evidence type="ECO:0000256" key="2">
    <source>
        <dbReference type="SAM" id="MobiDB-lite"/>
    </source>
</evidence>
<evidence type="ECO:0000305" key="3"/>
<comment type="function">
    <text evidence="1">Loads PCNA onto primed templates regulating velocity, spacing and restart activity of replication forks. May couple DNA replication to sister chromatid cohesion (By similarity).</text>
</comment>
<comment type="subcellular location">
    <subcellularLocation>
        <location evidence="1">Nucleus</location>
    </subcellularLocation>
</comment>
<comment type="similarity">
    <text evidence="3">Belongs to the DCC1 family.</text>
</comment>
<proteinExistence type="inferred from homology"/>
<feature type="chain" id="PRO_0000318069" description="Probable sister chromatid cohesion protein DCC1">
    <location>
        <begin position="1"/>
        <end position="376"/>
    </location>
</feature>
<feature type="region of interest" description="Disordered" evidence="2">
    <location>
        <begin position="213"/>
        <end position="232"/>
    </location>
</feature>
<feature type="compositionally biased region" description="Gly residues" evidence="2">
    <location>
        <begin position="219"/>
        <end position="232"/>
    </location>
</feature>
<protein>
    <recommendedName>
        <fullName>Probable sister chromatid cohesion protein DCC1</fullName>
    </recommendedName>
</protein>
<keyword id="KW-0131">Cell cycle</keyword>
<keyword id="KW-0235">DNA replication</keyword>
<keyword id="KW-0238">DNA-binding</keyword>
<keyword id="KW-0539">Nucleus</keyword>
<keyword id="KW-1185">Reference proteome</keyword>